<organism>
    <name type="scientific">Emericella nidulans (strain FGSC A4 / ATCC 38163 / CBS 112.46 / NRRL 194 / M139)</name>
    <name type="common">Aspergillus nidulans</name>
    <dbReference type="NCBI Taxonomy" id="227321"/>
    <lineage>
        <taxon>Eukaryota</taxon>
        <taxon>Fungi</taxon>
        <taxon>Dikarya</taxon>
        <taxon>Ascomycota</taxon>
        <taxon>Pezizomycotina</taxon>
        <taxon>Eurotiomycetes</taxon>
        <taxon>Eurotiomycetidae</taxon>
        <taxon>Eurotiales</taxon>
        <taxon>Aspergillaceae</taxon>
        <taxon>Aspergillus</taxon>
        <taxon>Aspergillus subgen. Nidulantes</taxon>
    </lineage>
</organism>
<reference key="1">
    <citation type="journal article" date="2005" name="Nature">
        <title>Sequencing of Aspergillus nidulans and comparative analysis with A. fumigatus and A. oryzae.</title>
        <authorList>
            <person name="Galagan J.E."/>
            <person name="Calvo S.E."/>
            <person name="Cuomo C."/>
            <person name="Ma L.-J."/>
            <person name="Wortman J.R."/>
            <person name="Batzoglou S."/>
            <person name="Lee S.-I."/>
            <person name="Bastuerkmen M."/>
            <person name="Spevak C.C."/>
            <person name="Clutterbuck J."/>
            <person name="Kapitonov V."/>
            <person name="Jurka J."/>
            <person name="Scazzocchio C."/>
            <person name="Farman M.L."/>
            <person name="Butler J."/>
            <person name="Purcell S."/>
            <person name="Harris S."/>
            <person name="Braus G.H."/>
            <person name="Draht O."/>
            <person name="Busch S."/>
            <person name="D'Enfert C."/>
            <person name="Bouchier C."/>
            <person name="Goldman G.H."/>
            <person name="Bell-Pedersen D."/>
            <person name="Griffiths-Jones S."/>
            <person name="Doonan J.H."/>
            <person name="Yu J."/>
            <person name="Vienken K."/>
            <person name="Pain A."/>
            <person name="Freitag M."/>
            <person name="Selker E.U."/>
            <person name="Archer D.B."/>
            <person name="Penalva M.A."/>
            <person name="Oakley B.R."/>
            <person name="Momany M."/>
            <person name="Tanaka T."/>
            <person name="Kumagai T."/>
            <person name="Asai K."/>
            <person name="Machida M."/>
            <person name="Nierman W.C."/>
            <person name="Denning D.W."/>
            <person name="Caddick M.X."/>
            <person name="Hynes M."/>
            <person name="Paoletti M."/>
            <person name="Fischer R."/>
            <person name="Miller B.L."/>
            <person name="Dyer P.S."/>
            <person name="Sachs M.S."/>
            <person name="Osmani S.A."/>
            <person name="Birren B.W."/>
        </authorList>
    </citation>
    <scope>NUCLEOTIDE SEQUENCE [LARGE SCALE GENOMIC DNA]</scope>
    <source>
        <strain>FGSC A4 / ATCC 38163 / CBS 112.46 / NRRL 194 / M139</strain>
    </source>
</reference>
<reference key="2">
    <citation type="journal article" date="2009" name="Fungal Genet. Biol.">
        <title>The 2008 update of the Aspergillus nidulans genome annotation: a community effort.</title>
        <authorList>
            <person name="Wortman J.R."/>
            <person name="Gilsenan J.M."/>
            <person name="Joardar V."/>
            <person name="Deegan J."/>
            <person name="Clutterbuck J."/>
            <person name="Andersen M.R."/>
            <person name="Archer D."/>
            <person name="Bencina M."/>
            <person name="Braus G."/>
            <person name="Coutinho P."/>
            <person name="von Dohren H."/>
            <person name="Doonan J."/>
            <person name="Driessen A.J."/>
            <person name="Durek P."/>
            <person name="Espeso E."/>
            <person name="Fekete E."/>
            <person name="Flipphi M."/>
            <person name="Estrada C.G."/>
            <person name="Geysens S."/>
            <person name="Goldman G."/>
            <person name="de Groot P.W."/>
            <person name="Hansen K."/>
            <person name="Harris S.D."/>
            <person name="Heinekamp T."/>
            <person name="Helmstaedt K."/>
            <person name="Henrissat B."/>
            <person name="Hofmann G."/>
            <person name="Homan T."/>
            <person name="Horio T."/>
            <person name="Horiuchi H."/>
            <person name="James S."/>
            <person name="Jones M."/>
            <person name="Karaffa L."/>
            <person name="Karanyi Z."/>
            <person name="Kato M."/>
            <person name="Keller N."/>
            <person name="Kelly D.E."/>
            <person name="Kiel J.A."/>
            <person name="Kim J.M."/>
            <person name="van der Klei I.J."/>
            <person name="Klis F.M."/>
            <person name="Kovalchuk A."/>
            <person name="Krasevec N."/>
            <person name="Kubicek C.P."/>
            <person name="Liu B."/>
            <person name="Maccabe A."/>
            <person name="Meyer V."/>
            <person name="Mirabito P."/>
            <person name="Miskei M."/>
            <person name="Mos M."/>
            <person name="Mullins J."/>
            <person name="Nelson D.R."/>
            <person name="Nielsen J."/>
            <person name="Oakley B.R."/>
            <person name="Osmani S.A."/>
            <person name="Pakula T."/>
            <person name="Paszewski A."/>
            <person name="Paulsen I."/>
            <person name="Pilsyk S."/>
            <person name="Pocsi I."/>
            <person name="Punt P.J."/>
            <person name="Ram A.F."/>
            <person name="Ren Q."/>
            <person name="Robellet X."/>
            <person name="Robson G."/>
            <person name="Seiboth B."/>
            <person name="van Solingen P."/>
            <person name="Specht T."/>
            <person name="Sun J."/>
            <person name="Taheri-Talesh N."/>
            <person name="Takeshita N."/>
            <person name="Ussery D."/>
            <person name="vanKuyk P.A."/>
            <person name="Visser H."/>
            <person name="van de Vondervoort P.J."/>
            <person name="de Vries R.P."/>
            <person name="Walton J."/>
            <person name="Xiang X."/>
            <person name="Xiong Y."/>
            <person name="Zeng A.P."/>
            <person name="Brandt B.W."/>
            <person name="Cornell M.J."/>
            <person name="van den Hondel C.A."/>
            <person name="Visser J."/>
            <person name="Oliver S.G."/>
            <person name="Turner G."/>
        </authorList>
    </citation>
    <scope>GENOME REANNOTATION</scope>
    <source>
        <strain>FGSC A4 / ATCC 38163 / CBS 112.46 / NRRL 194 / M139</strain>
    </source>
</reference>
<proteinExistence type="inferred from homology"/>
<comment type="subcellular location">
    <subcellularLocation>
        <location evidence="1">Vacuole membrane</location>
        <topology evidence="1">Peripheral membrane protein</topology>
    </subcellularLocation>
</comment>
<comment type="similarity">
    <text evidence="4">Belongs to the IML1 family.</text>
</comment>
<name>IML1_EMENI</name>
<sequence length="1831" mass="205618">MSMRGSMRRSHLRQVSAASLDSVSSRSVDTAQHDALQLSDHPSSSDGKTYKFSSTGLDRRQCSLWVHDETFSKEEILFNQAAFADTGVRDGDLIEILSARTVVDGPSSGQSQSHSFNLAVKPDMRTRSMRDVHGHGHSHVETASSSRSHAMSKFKTPLQTRCLFIAKPLPNEIRTKHPKLELSVTSSVANIFGFKNRSTVYISIVEQTQCAASHVDISFRDQFLVRSDMWRLVMSELAGKIVYKGQKIVFMGSIKATVKNIFIRGKKVLSGFFSPQTIPVFRSESAKYVLFIQMSREMWDFDSEGTGDILFSRVINGFLPELFKRWANADARHLVTIVLFTRVEYDASITGLPSTLNSENLKNTSEPNHAPTRDFYRVVVNDMASGHWTTILDELKKDFRTFLRDVSILKVPEDPVASTSASTTPKATIGGRPSTALRGNILEAIHLASSHLAFDHIDRDMVHTGTSIIVITPGSGVFEVSYESLASTTEALTNRGIAIDLVCLSPMPLHSVPLFKYREPNRGGRSSFSYGGDIQGGGYSPEMRHPFASLTNRTHFSPKSTFSSTSPASGPRGPWTRANDWSYGIPHWLDISYWNPETYRESRRILKKDPNAPIPFTVTKKSKLFKSRVRMYEIQMGGVMESEQSNISIPYLLEDQITSRSLNVPPKTSFRRNSHFNHQLSDSLRPGSFLGNMTNPKETILSRSRSASATAAWMDNYDDNVFRSFSKRNHRRKQTKPKRPSEPEVQVSTTHDRLSARSITHLREHETKPNEWPRKEAAPKIPATKAVSPRKPALKAPSKTKVPRISRTISFALRGLGVAPPRAQASTEVNVEHATGLPSSNTKRSAGSLRESKSIESLSAASDSTSTATVVEASPMPSTPPRQRKSPTITPSRPISIRVPLKTPIEDSDQPTRSVAESFGTNGADLPITEKASLEHQTRKSIPRFELTTSPGLRESSAKNLQSRLLAPWVRSINPCNTPREVSRDTSWFGRWQHAYPRPPHVAVVKWKSLKSPAVLPLTTEEFPTASELASDYLQTPYRVFPNDDAEGIEAPKTTGLLMREMISLRLSHGFQIVVGNNVVEASGRYALRSPNVFDTQTLEMDGATVFLSKGHSIHRLVCTGGNEIEVTRFVHRSLSDLVSEKKNGLDIVYSLAMRTIMSREYDIKHINLRSSAEEYNWNYADNYIAGHRDYLFNPAQQLHFWRVRFVLIPVRLHVHARRHMQPINEDNEEEIHLLGINQLTLIWQRHKYVPPEEKRIETSSKSRDQNPLNILYQTRNPSEVVAAELNLLADPGLESSPAQLLPESELLERSSISLSSLAQIVQSDKGVRMMDRRWHWRLHYNCFIGSEFTTWLCQNFRDIETREEAVEFGNKLLELNLFQHVEQRHKFRDGNYFYQISSEYRVARPESRNSWFPQIRPDKSIPSTPATADNWKDSPLSAHSRSASVDQNAPQTPTTPSRSKSKASVMLSKTLKYDVDPRKRSNRPEVIDLHYDRLHNPDNCFHIELSWMNTTPKLIEDTVQSWAATAEKFGLKLVQVPIAEASAIDQTQPFRQPYRVKLKVPPPKGPSSTIFNAASFSQQDAPDPHYFQKLILKKFDFVLDFEARSAFPPDVEVGYSWGRPDYRYSQYIHQSGTLLVQITDEGDFLVLANRLVSTRTVPFTGTRDRDHRARAGYDPMGTIERDRLSPRLSPLVRPIHDIAGPASPMAHSSLDSASLYRAPEHVLHGFEEFCNDPVRLGQLYSESFVYPVSAKAAPTTASCVDSSIPSLELPAPVIGHHISPPPGTPVRPETRTRAASTSANGSLPLIDPRSRQREESSVARGSPRSASIML</sequence>
<keyword id="KW-0472">Membrane</keyword>
<keyword id="KW-1185">Reference proteome</keyword>
<keyword id="KW-0926">Vacuole</keyword>
<feature type="chain" id="PRO_0000301772" description="Vacuolar membrane-associated protein iml1">
    <location>
        <begin position="1"/>
        <end position="1831"/>
    </location>
</feature>
<feature type="domain" description="DEP" evidence="2">
    <location>
        <begin position="1324"/>
        <end position="1399"/>
    </location>
</feature>
<feature type="region of interest" description="Disordered" evidence="3">
    <location>
        <begin position="31"/>
        <end position="52"/>
    </location>
</feature>
<feature type="region of interest" description="Disordered" evidence="3">
    <location>
        <begin position="130"/>
        <end position="150"/>
    </location>
</feature>
<feature type="region of interest" description="Disordered" evidence="3">
    <location>
        <begin position="724"/>
        <end position="801"/>
    </location>
</feature>
<feature type="region of interest" description="Disordered" evidence="3">
    <location>
        <begin position="820"/>
        <end position="924"/>
    </location>
</feature>
<feature type="region of interest" description="Disordered" evidence="3">
    <location>
        <begin position="1412"/>
        <end position="1467"/>
    </location>
</feature>
<feature type="region of interest" description="Disordered" evidence="3">
    <location>
        <begin position="1772"/>
        <end position="1831"/>
    </location>
</feature>
<feature type="compositionally biased region" description="Polar residues" evidence="3">
    <location>
        <begin position="40"/>
        <end position="52"/>
    </location>
</feature>
<feature type="compositionally biased region" description="Basic and acidic residues" evidence="3">
    <location>
        <begin position="130"/>
        <end position="140"/>
    </location>
</feature>
<feature type="compositionally biased region" description="Basic residues" evidence="3">
    <location>
        <begin position="725"/>
        <end position="738"/>
    </location>
</feature>
<feature type="compositionally biased region" description="Basic and acidic residues" evidence="3">
    <location>
        <begin position="750"/>
        <end position="778"/>
    </location>
</feature>
<feature type="compositionally biased region" description="Low complexity" evidence="3">
    <location>
        <begin position="855"/>
        <end position="874"/>
    </location>
</feature>
<feature type="compositionally biased region" description="Polar residues" evidence="3">
    <location>
        <begin position="911"/>
        <end position="921"/>
    </location>
</feature>
<feature type="compositionally biased region" description="Polar residues" evidence="3">
    <location>
        <begin position="1438"/>
        <end position="1459"/>
    </location>
</feature>
<feature type="compositionally biased region" description="Basic and acidic residues" evidence="3">
    <location>
        <begin position="1809"/>
        <end position="1818"/>
    </location>
</feature>
<accession>Q5AW24</accession>
<accession>C8VBI8</accession>
<dbReference type="EMBL" id="AACD01000129">
    <property type="protein sequence ID" value="EAA62086.1"/>
    <property type="molecule type" value="Genomic_DNA"/>
</dbReference>
<dbReference type="EMBL" id="BN001304">
    <property type="protein sequence ID" value="CBF79520.1"/>
    <property type="molecule type" value="Genomic_DNA"/>
</dbReference>
<dbReference type="RefSeq" id="XP_680775.1">
    <property type="nucleotide sequence ID" value="XM_675683.1"/>
</dbReference>
<dbReference type="SMR" id="Q5AW24"/>
<dbReference type="FunCoup" id="Q5AW24">
    <property type="interactions" value="620"/>
</dbReference>
<dbReference type="STRING" id="227321.Q5AW24"/>
<dbReference type="EnsemblFungi" id="CBF79520">
    <property type="protein sequence ID" value="CBF79520"/>
    <property type="gene ID" value="ANIA_07506"/>
</dbReference>
<dbReference type="KEGG" id="ani:ANIA_07506"/>
<dbReference type="VEuPathDB" id="FungiDB:AN7506"/>
<dbReference type="eggNOG" id="KOG3572">
    <property type="taxonomic scope" value="Eukaryota"/>
</dbReference>
<dbReference type="HOGENOM" id="CLU_000935_1_1_1"/>
<dbReference type="InParanoid" id="Q5AW24"/>
<dbReference type="OMA" id="SWMNATP"/>
<dbReference type="OrthoDB" id="39497at2759"/>
<dbReference type="Proteomes" id="UP000000560">
    <property type="component" value="Chromosome IV"/>
</dbReference>
<dbReference type="GO" id="GO:1990130">
    <property type="term" value="C:GATOR1 complex"/>
    <property type="evidence" value="ECO:0000318"/>
    <property type="project" value="GO_Central"/>
</dbReference>
<dbReference type="GO" id="GO:0005774">
    <property type="term" value="C:vacuolar membrane"/>
    <property type="evidence" value="ECO:0007669"/>
    <property type="project" value="UniProtKB-SubCell"/>
</dbReference>
<dbReference type="GO" id="GO:0005096">
    <property type="term" value="F:GTPase activator activity"/>
    <property type="evidence" value="ECO:0007669"/>
    <property type="project" value="InterPro"/>
</dbReference>
<dbReference type="GO" id="GO:0035556">
    <property type="term" value="P:intracellular signal transduction"/>
    <property type="evidence" value="ECO:0007669"/>
    <property type="project" value="InterPro"/>
</dbReference>
<dbReference type="GO" id="GO:1904262">
    <property type="term" value="P:negative regulation of TORC1 signaling"/>
    <property type="evidence" value="ECO:0000318"/>
    <property type="project" value="GO_Central"/>
</dbReference>
<dbReference type="GO" id="GO:0010508">
    <property type="term" value="P:positive regulation of autophagy"/>
    <property type="evidence" value="ECO:0000318"/>
    <property type="project" value="GO_Central"/>
</dbReference>
<dbReference type="CDD" id="cd04449">
    <property type="entry name" value="DEP_DEPDC5-like"/>
    <property type="match status" value="1"/>
</dbReference>
<dbReference type="FunFam" id="1.10.10.10:FF:001090">
    <property type="entry name" value="Vacuolar membrane-associated protein iml1"/>
    <property type="match status" value="1"/>
</dbReference>
<dbReference type="Gene3D" id="1.10.10.10">
    <property type="entry name" value="Winged helix-like DNA-binding domain superfamily/Winged helix DNA-binding domain"/>
    <property type="match status" value="1"/>
</dbReference>
<dbReference type="InterPro" id="IPR000591">
    <property type="entry name" value="DEP_dom"/>
</dbReference>
<dbReference type="InterPro" id="IPR045838">
    <property type="entry name" value="DEPDC5_CTD"/>
</dbReference>
<dbReference type="InterPro" id="IPR027244">
    <property type="entry name" value="IML1"/>
</dbReference>
<dbReference type="InterPro" id="IPR048255">
    <property type="entry name" value="IML1_N"/>
</dbReference>
<dbReference type="InterPro" id="IPR036388">
    <property type="entry name" value="WH-like_DNA-bd_sf"/>
</dbReference>
<dbReference type="InterPro" id="IPR036390">
    <property type="entry name" value="WH_DNA-bd_sf"/>
</dbReference>
<dbReference type="PANTHER" id="PTHR13179">
    <property type="entry name" value="DEP DOMAIN CONTAINING PROTEIN 5"/>
    <property type="match status" value="1"/>
</dbReference>
<dbReference type="PANTHER" id="PTHR13179:SF8">
    <property type="entry name" value="GATOR COMPLEX PROTEIN DEPDC5"/>
    <property type="match status" value="1"/>
</dbReference>
<dbReference type="Pfam" id="PF00610">
    <property type="entry name" value="DEP"/>
    <property type="match status" value="1"/>
</dbReference>
<dbReference type="Pfam" id="PF19418">
    <property type="entry name" value="DEPDC5_CTD"/>
    <property type="match status" value="1"/>
</dbReference>
<dbReference type="Pfam" id="PF12257">
    <property type="entry name" value="IML1"/>
    <property type="match status" value="1"/>
</dbReference>
<dbReference type="Pfam" id="PF24438">
    <property type="entry name" value="IML1_N_fung"/>
    <property type="match status" value="1"/>
</dbReference>
<dbReference type="SMART" id="SM00049">
    <property type="entry name" value="DEP"/>
    <property type="match status" value="1"/>
</dbReference>
<dbReference type="SUPFAM" id="SSF46785">
    <property type="entry name" value="Winged helix' DNA-binding domain"/>
    <property type="match status" value="1"/>
</dbReference>
<dbReference type="PROSITE" id="PS50186">
    <property type="entry name" value="DEP"/>
    <property type="match status" value="1"/>
</dbReference>
<gene>
    <name type="primary">iml1</name>
    <name type="ORF">AN7506</name>
</gene>
<evidence type="ECO:0000250" key="1"/>
<evidence type="ECO:0000255" key="2">
    <source>
        <dbReference type="PROSITE-ProRule" id="PRU00066"/>
    </source>
</evidence>
<evidence type="ECO:0000256" key="3">
    <source>
        <dbReference type="SAM" id="MobiDB-lite"/>
    </source>
</evidence>
<evidence type="ECO:0000305" key="4"/>
<protein>
    <recommendedName>
        <fullName>Vacuolar membrane-associated protein iml1</fullName>
    </recommendedName>
</protein>